<organism>
    <name type="scientific">Mus musculus</name>
    <name type="common">Mouse</name>
    <dbReference type="NCBI Taxonomy" id="10090"/>
    <lineage>
        <taxon>Eukaryota</taxon>
        <taxon>Metazoa</taxon>
        <taxon>Chordata</taxon>
        <taxon>Craniata</taxon>
        <taxon>Vertebrata</taxon>
        <taxon>Euteleostomi</taxon>
        <taxon>Mammalia</taxon>
        <taxon>Eutheria</taxon>
        <taxon>Euarchontoglires</taxon>
        <taxon>Glires</taxon>
        <taxon>Rodentia</taxon>
        <taxon>Myomorpha</taxon>
        <taxon>Muroidea</taxon>
        <taxon>Muridae</taxon>
        <taxon>Murinae</taxon>
        <taxon>Mus</taxon>
        <taxon>Mus</taxon>
    </lineage>
</organism>
<protein>
    <recommendedName>
        <fullName>Connector enhancer of kinase suppressor of ras 3</fullName>
        <shortName>Connector enhancer of KSR 3</shortName>
    </recommendedName>
    <alternativeName>
        <fullName>CNK homolog protein 3</fullName>
        <shortName>CNK3</shortName>
    </alternativeName>
    <alternativeName>
        <fullName>CNKSR family member 3</fullName>
    </alternativeName>
    <alternativeName>
        <fullName>Maguin-like protein</fullName>
    </alternativeName>
</protein>
<proteinExistence type="evidence at protein level"/>
<sequence length="555" mass="61870">MEPVTKWSPKQVVDWTRGLDDCLQPYVHKFEREKIDGEQLLKISHQDLEELGVTRIGHQELVLEAVDLLCALNYGLETDTMKNLVLKLRASSHNLQNYISSRRKSPAYDGNTSRKPPNEFLTSVVELIGAAKALLAWLDRAPFTGITDLSVTKNKIIQLCLDLTTAVQKDCLIAEMEDKVLNVVKVLNGICDKTMRSTTDPVMSQCACLEEVHLPNVRPGEGLGMYIKSTYDGLHVITGTTENSPADRSQKIHAGDEVIQVNRQTVVGWQLKNLVRKLRENPTGVVLLLKKRPTGSFSFTPAPLKNLRWKPPLVQTSPPPTTTQSPESTMDASLKKEKPAILDLYIPPPPAVPYSPRDENVSFGYRGHSKSKQPLPVRKGSESPNSFLDQESQRRRFTIADSDQLPGYSVETNVLPTKMRGKTPSYGKPRPLSMPADGNWMGIVDPFAKPRGNGRKGEDALCRYFSNERITPITEESASPMYRFSRPLTERHLVRGADYIRGSRCYINSDLHSSATIPFQEEGSKKKSASSSAKASSGEPSLLVSWLTRLKLLTH</sequence>
<name>CNKR3_MOUSE</name>
<feature type="chain" id="PRO_0000311106" description="Connector enhancer of kinase suppressor of ras 3">
    <location>
        <begin position="1"/>
        <end position="555"/>
    </location>
</feature>
<feature type="domain" description="SAM" evidence="3">
    <location>
        <begin position="7"/>
        <end position="72"/>
    </location>
</feature>
<feature type="domain" description="CRIC" evidence="4">
    <location>
        <begin position="80"/>
        <end position="174"/>
    </location>
</feature>
<feature type="domain" description="PDZ" evidence="2">
    <location>
        <begin position="211"/>
        <end position="293"/>
    </location>
</feature>
<feature type="domain" description="DUF1170">
    <location>
        <begin position="325"/>
        <end position="546"/>
    </location>
</feature>
<feature type="region of interest" description="Disordered" evidence="5">
    <location>
        <begin position="308"/>
        <end position="333"/>
    </location>
</feature>
<feature type="region of interest" description="Disordered" evidence="5">
    <location>
        <begin position="362"/>
        <end position="389"/>
    </location>
</feature>
<feature type="region of interest" description="Disordered" evidence="5">
    <location>
        <begin position="518"/>
        <end position="538"/>
    </location>
</feature>
<feature type="compositionally biased region" description="Low complexity" evidence="5">
    <location>
        <begin position="311"/>
        <end position="329"/>
    </location>
</feature>
<feature type="modified residue" description="Phosphoserine" evidence="10">
    <location>
        <position position="381"/>
    </location>
</feature>
<feature type="modified residue" description="Phosphoserine" evidence="10">
    <location>
        <position position="383"/>
    </location>
</feature>
<feature type="splice variant" id="VSP_029391" description="In isoform 2." evidence="8">
    <location>
        <begin position="1"/>
        <end position="241"/>
    </location>
</feature>
<feature type="splice variant" id="VSP_029615" description="In isoform 2." evidence="8">
    <original>EN</original>
    <variation>MQ</variation>
    <location>
        <begin position="242"/>
        <end position="243"/>
    </location>
</feature>
<feature type="sequence conflict" description="In Ref. 3; AAH31194." evidence="9" ref="3">
    <original>N</original>
    <variation>Q</variation>
    <location>
        <position position="243"/>
    </location>
</feature>
<feature type="sequence conflict" description="In Ref. 2; BAE29189." evidence="9" ref="2">
    <original>L</original>
    <variation>Q</variation>
    <location>
        <position position="288"/>
    </location>
</feature>
<keyword id="KW-0025">Alternative splicing</keyword>
<keyword id="KW-1003">Cell membrane</keyword>
<keyword id="KW-0963">Cytoplasm</keyword>
<keyword id="KW-0472">Membrane</keyword>
<keyword id="KW-0597">Phosphoprotein</keyword>
<keyword id="KW-1185">Reference proteome</keyword>
<reference key="1">
    <citation type="submission" date="2002-09" db="EMBL/GenBank/DDBJ databases">
        <title>Cloning, expression and comparison of human and mouse ML (maguin-like) genes, and expression in mouse oogenesis.</title>
        <authorList>
            <person name="Tzolovsky G."/>
            <person name="McGurk L."/>
            <person name="Pathirana S."/>
            <person name="Slee R."/>
            <person name="Hillier S."/>
            <person name="Clinton M."/>
            <person name="Bownes M."/>
        </authorList>
    </citation>
    <scope>NUCLEOTIDE SEQUENCE [MRNA] (ISOFORM 1)</scope>
    <source>
        <strain>FVB/N</strain>
    </source>
</reference>
<reference key="2">
    <citation type="journal article" date="2005" name="Science">
        <title>The transcriptional landscape of the mammalian genome.</title>
        <authorList>
            <person name="Carninci P."/>
            <person name="Kasukawa T."/>
            <person name="Katayama S."/>
            <person name="Gough J."/>
            <person name="Frith M.C."/>
            <person name="Maeda N."/>
            <person name="Oyama R."/>
            <person name="Ravasi T."/>
            <person name="Lenhard B."/>
            <person name="Wells C."/>
            <person name="Kodzius R."/>
            <person name="Shimokawa K."/>
            <person name="Bajic V.B."/>
            <person name="Brenner S.E."/>
            <person name="Batalov S."/>
            <person name="Forrest A.R."/>
            <person name="Zavolan M."/>
            <person name="Davis M.J."/>
            <person name="Wilming L.G."/>
            <person name="Aidinis V."/>
            <person name="Allen J.E."/>
            <person name="Ambesi-Impiombato A."/>
            <person name="Apweiler R."/>
            <person name="Aturaliya R.N."/>
            <person name="Bailey T.L."/>
            <person name="Bansal M."/>
            <person name="Baxter L."/>
            <person name="Beisel K.W."/>
            <person name="Bersano T."/>
            <person name="Bono H."/>
            <person name="Chalk A.M."/>
            <person name="Chiu K.P."/>
            <person name="Choudhary V."/>
            <person name="Christoffels A."/>
            <person name="Clutterbuck D.R."/>
            <person name="Crowe M.L."/>
            <person name="Dalla E."/>
            <person name="Dalrymple B.P."/>
            <person name="de Bono B."/>
            <person name="Della Gatta G."/>
            <person name="di Bernardo D."/>
            <person name="Down T."/>
            <person name="Engstrom P."/>
            <person name="Fagiolini M."/>
            <person name="Faulkner G."/>
            <person name="Fletcher C.F."/>
            <person name="Fukushima T."/>
            <person name="Furuno M."/>
            <person name="Futaki S."/>
            <person name="Gariboldi M."/>
            <person name="Georgii-Hemming P."/>
            <person name="Gingeras T.R."/>
            <person name="Gojobori T."/>
            <person name="Green R.E."/>
            <person name="Gustincich S."/>
            <person name="Harbers M."/>
            <person name="Hayashi Y."/>
            <person name="Hensch T.K."/>
            <person name="Hirokawa N."/>
            <person name="Hill D."/>
            <person name="Huminiecki L."/>
            <person name="Iacono M."/>
            <person name="Ikeo K."/>
            <person name="Iwama A."/>
            <person name="Ishikawa T."/>
            <person name="Jakt M."/>
            <person name="Kanapin A."/>
            <person name="Katoh M."/>
            <person name="Kawasawa Y."/>
            <person name="Kelso J."/>
            <person name="Kitamura H."/>
            <person name="Kitano H."/>
            <person name="Kollias G."/>
            <person name="Krishnan S.P."/>
            <person name="Kruger A."/>
            <person name="Kummerfeld S.K."/>
            <person name="Kurochkin I.V."/>
            <person name="Lareau L.F."/>
            <person name="Lazarevic D."/>
            <person name="Lipovich L."/>
            <person name="Liu J."/>
            <person name="Liuni S."/>
            <person name="McWilliam S."/>
            <person name="Madan Babu M."/>
            <person name="Madera M."/>
            <person name="Marchionni L."/>
            <person name="Matsuda H."/>
            <person name="Matsuzawa S."/>
            <person name="Miki H."/>
            <person name="Mignone F."/>
            <person name="Miyake S."/>
            <person name="Morris K."/>
            <person name="Mottagui-Tabar S."/>
            <person name="Mulder N."/>
            <person name="Nakano N."/>
            <person name="Nakauchi H."/>
            <person name="Ng P."/>
            <person name="Nilsson R."/>
            <person name="Nishiguchi S."/>
            <person name="Nishikawa S."/>
            <person name="Nori F."/>
            <person name="Ohara O."/>
            <person name="Okazaki Y."/>
            <person name="Orlando V."/>
            <person name="Pang K.C."/>
            <person name="Pavan W.J."/>
            <person name="Pavesi G."/>
            <person name="Pesole G."/>
            <person name="Petrovsky N."/>
            <person name="Piazza S."/>
            <person name="Reed J."/>
            <person name="Reid J.F."/>
            <person name="Ring B.Z."/>
            <person name="Ringwald M."/>
            <person name="Rost B."/>
            <person name="Ruan Y."/>
            <person name="Salzberg S.L."/>
            <person name="Sandelin A."/>
            <person name="Schneider C."/>
            <person name="Schoenbach C."/>
            <person name="Sekiguchi K."/>
            <person name="Semple C.A."/>
            <person name="Seno S."/>
            <person name="Sessa L."/>
            <person name="Sheng Y."/>
            <person name="Shibata Y."/>
            <person name="Shimada H."/>
            <person name="Shimada K."/>
            <person name="Silva D."/>
            <person name="Sinclair B."/>
            <person name="Sperling S."/>
            <person name="Stupka E."/>
            <person name="Sugiura K."/>
            <person name="Sultana R."/>
            <person name="Takenaka Y."/>
            <person name="Taki K."/>
            <person name="Tammoja K."/>
            <person name="Tan S.L."/>
            <person name="Tang S."/>
            <person name="Taylor M.S."/>
            <person name="Tegner J."/>
            <person name="Teichmann S.A."/>
            <person name="Ueda H.R."/>
            <person name="van Nimwegen E."/>
            <person name="Verardo R."/>
            <person name="Wei C.L."/>
            <person name="Yagi K."/>
            <person name="Yamanishi H."/>
            <person name="Zabarovsky E."/>
            <person name="Zhu S."/>
            <person name="Zimmer A."/>
            <person name="Hide W."/>
            <person name="Bult C."/>
            <person name="Grimmond S.M."/>
            <person name="Teasdale R.D."/>
            <person name="Liu E.T."/>
            <person name="Brusic V."/>
            <person name="Quackenbush J."/>
            <person name="Wahlestedt C."/>
            <person name="Mattick J.S."/>
            <person name="Hume D.A."/>
            <person name="Kai C."/>
            <person name="Sasaki D."/>
            <person name="Tomaru Y."/>
            <person name="Fukuda S."/>
            <person name="Kanamori-Katayama M."/>
            <person name="Suzuki M."/>
            <person name="Aoki J."/>
            <person name="Arakawa T."/>
            <person name="Iida J."/>
            <person name="Imamura K."/>
            <person name="Itoh M."/>
            <person name="Kato T."/>
            <person name="Kawaji H."/>
            <person name="Kawagashira N."/>
            <person name="Kawashima T."/>
            <person name="Kojima M."/>
            <person name="Kondo S."/>
            <person name="Konno H."/>
            <person name="Nakano K."/>
            <person name="Ninomiya N."/>
            <person name="Nishio T."/>
            <person name="Okada M."/>
            <person name="Plessy C."/>
            <person name="Shibata K."/>
            <person name="Shiraki T."/>
            <person name="Suzuki S."/>
            <person name="Tagami M."/>
            <person name="Waki K."/>
            <person name="Watahiki A."/>
            <person name="Okamura-Oho Y."/>
            <person name="Suzuki H."/>
            <person name="Kawai J."/>
            <person name="Hayashizaki Y."/>
        </authorList>
    </citation>
    <scope>NUCLEOTIDE SEQUENCE [LARGE SCALE MRNA] (ISOFORM 1)</scope>
    <source>
        <strain>C57BL/6J</strain>
        <tissue>Bone marrow</tissue>
        <tissue>Muellerian duct</tissue>
    </source>
</reference>
<reference key="3">
    <citation type="journal article" date="2004" name="Genome Res.">
        <title>The status, quality, and expansion of the NIH full-length cDNA project: the Mammalian Gene Collection (MGC).</title>
        <authorList>
            <consortium name="The MGC Project Team"/>
        </authorList>
    </citation>
    <scope>NUCLEOTIDE SEQUENCE [LARGE SCALE MRNA] (ISOFORM 2)</scope>
    <source>
        <strain>FVB/N-3</strain>
        <tissue>Mammary tumor</tissue>
    </source>
</reference>
<reference key="4">
    <citation type="journal article" date="2007" name="Proc. Natl. Acad. Sci. U.S.A.">
        <title>Large-scale phosphorylation analysis of mouse liver.</title>
        <authorList>
            <person name="Villen J."/>
            <person name="Beausoleil S.A."/>
            <person name="Gerber S.A."/>
            <person name="Gygi S.P."/>
        </authorList>
    </citation>
    <scope>IDENTIFICATION BY MASS SPECTROMETRY [LARGE SCALE ANALYSIS]</scope>
    <source>
        <tissue>Liver</tissue>
    </source>
</reference>
<reference key="5">
    <citation type="journal article" date="2009" name="FASEB J.">
        <title>Cnksr3 is a direct mineralocorticoid receptor target gene and plays a key role in the regulation of the epithelial sodium channel.</title>
        <authorList>
            <person name="Ziera T."/>
            <person name="Irlbacher H."/>
            <person name="Fromm A."/>
            <person name="Latouche C."/>
            <person name="Krug S.M."/>
            <person name="Fromm M."/>
            <person name="Jaisser F."/>
            <person name="Borden S.A."/>
        </authorList>
    </citation>
    <scope>FUNCTION</scope>
    <scope>TISSUE SPECIFICITY</scope>
</reference>
<reference key="6">
    <citation type="journal article" date="2010" name="Cell">
        <title>A tissue-specific atlas of mouse protein phosphorylation and expression.</title>
        <authorList>
            <person name="Huttlin E.L."/>
            <person name="Jedrychowski M.P."/>
            <person name="Elias J.E."/>
            <person name="Goswami T."/>
            <person name="Rad R."/>
            <person name="Beausoleil S.A."/>
            <person name="Villen J."/>
            <person name="Haas W."/>
            <person name="Sowa M.E."/>
            <person name="Gygi S.P."/>
        </authorList>
    </citation>
    <scope>PHOSPHORYLATION [LARGE SCALE ANALYSIS] AT SER-381 AND SER-383</scope>
    <scope>IDENTIFICATION BY MASS SPECTROMETRY [LARGE SCALE ANALYSIS]</scope>
    <source>
        <tissue>Brain</tissue>
        <tissue>Heart</tissue>
        <tissue>Kidney</tissue>
        <tissue>Liver</tissue>
        <tissue>Lung</tissue>
        <tissue>Pancreas</tissue>
        <tissue>Spleen</tissue>
        <tissue>Testis</tissue>
    </source>
</reference>
<reference key="7">
    <citation type="journal article" date="2012" name="J. Biol. Chem.">
        <title>Scaffold protein connector enhancer of kinase suppressor of Ras isoform 3 (CNK3) coordinates assembly of a multiprotein epithelial sodium channel (ENaC)-regulatory complex.</title>
        <authorList>
            <person name="Soundararajan R."/>
            <person name="Ziera T."/>
            <person name="Koo E."/>
            <person name="Ling K."/>
            <person name="Wang J."/>
            <person name="Borden S.A."/>
            <person name="Pearce D."/>
        </authorList>
    </citation>
    <scope>FUNCTION</scope>
    <scope>SUBCELLULAR LOCATION</scope>
</reference>
<accession>Q8BMA3</accession>
<accession>Q3UDS2</accession>
<accession>Q8K2K0</accession>
<comment type="function">
    <text evidence="6 7">Involved in transepithelial sodium transport. Regulates aldosterone-induced and epithelial sodium channel (ENaC)-mediated sodium transport through regulation of ENaC cell surface expression. Acts as a scaffold protein coordinating the assembly of an ENaC-regulatory complex (ERC).</text>
</comment>
<comment type="subunit">
    <text evidence="1">Interacts with epithelial sodium channel ENaC. Interacts directly with SCNN1A (ENaC subunit alpha) and SCNN1B (ENaC subunit beta) C-terminal tails. Interacts with ENaC regulatory proteins NEDD4L, RAF1 and SGK1.</text>
</comment>
<comment type="subcellular location">
    <subcellularLocation>
        <location evidence="7">Cytoplasm</location>
    </subcellularLocation>
    <subcellularLocation>
        <location evidence="7">Apical cell membrane</location>
        <topology evidence="7">Peripheral membrane protein</topology>
    </subcellularLocation>
</comment>
<comment type="alternative products">
    <event type="alternative splicing"/>
    <isoform>
        <id>Q8BMA3-1</id>
        <name>1</name>
        <sequence type="displayed"/>
    </isoform>
    <isoform>
        <id>Q8BMA3-2</id>
        <name>2</name>
        <sequence type="described" ref="VSP_029391 VSP_029615"/>
    </isoform>
</comment>
<comment type="tissue specificity">
    <text evidence="6">Expressed in kidney.</text>
</comment>
<comment type="domain">
    <text evidence="1">The PDZ domain is required for interaction with ENaC and SGK1, but not for interaction with NEDDL4 and RAF1.</text>
</comment>
<comment type="similarity">
    <text evidence="9">Belongs to the CNKSR family.</text>
</comment>
<dbReference type="EMBL" id="AY151137">
    <property type="protein sequence ID" value="AAN72835.1"/>
    <property type="molecule type" value="mRNA"/>
</dbReference>
<dbReference type="EMBL" id="AK033015">
    <property type="protein sequence ID" value="BAC28127.1"/>
    <property type="molecule type" value="mRNA"/>
</dbReference>
<dbReference type="EMBL" id="AK149951">
    <property type="protein sequence ID" value="BAE29189.1"/>
    <property type="molecule type" value="mRNA"/>
</dbReference>
<dbReference type="EMBL" id="BC031194">
    <property type="protein sequence ID" value="AAH31194.1"/>
    <property type="molecule type" value="mRNA"/>
</dbReference>
<dbReference type="CCDS" id="CCDS56690.1">
    <molecule id="Q8BMA3-1"/>
</dbReference>
<dbReference type="RefSeq" id="NP_766134.1">
    <molecule id="Q8BMA3-1"/>
    <property type="nucleotide sequence ID" value="NM_172546.2"/>
</dbReference>
<dbReference type="SMR" id="Q8BMA3"/>
<dbReference type="BioGRID" id="229657">
    <property type="interactions" value="3"/>
</dbReference>
<dbReference type="FunCoup" id="Q8BMA3">
    <property type="interactions" value="17"/>
</dbReference>
<dbReference type="IntAct" id="Q8BMA3">
    <property type="interactions" value="3"/>
</dbReference>
<dbReference type="STRING" id="10090.ENSMUSP00000015346"/>
<dbReference type="iPTMnet" id="Q8BMA3"/>
<dbReference type="PhosphoSitePlus" id="Q8BMA3"/>
<dbReference type="PaxDb" id="10090-ENSMUSP00000015346"/>
<dbReference type="PeptideAtlas" id="Q8BMA3"/>
<dbReference type="ProteomicsDB" id="285509">
    <molecule id="Q8BMA3-1"/>
</dbReference>
<dbReference type="ProteomicsDB" id="285510">
    <molecule id="Q8BMA3-2"/>
</dbReference>
<dbReference type="Pumba" id="Q8BMA3"/>
<dbReference type="DNASU" id="215748"/>
<dbReference type="Ensembl" id="ENSMUST00000015346.12">
    <molecule id="Q8BMA3-1"/>
    <property type="protein sequence ID" value="ENSMUSP00000015346.6"/>
    <property type="gene ID" value="ENSMUSG00000015202.14"/>
</dbReference>
<dbReference type="Ensembl" id="ENSMUST00000150282.2">
    <molecule id="Q8BMA3-2"/>
    <property type="protein sequence ID" value="ENSMUSP00000115863.2"/>
    <property type="gene ID" value="ENSMUSG00000015202.14"/>
</dbReference>
<dbReference type="GeneID" id="215748"/>
<dbReference type="KEGG" id="mmu:215748"/>
<dbReference type="UCSC" id="uc007efb.1">
    <molecule id="Q8BMA3-1"/>
    <property type="organism name" value="mouse"/>
</dbReference>
<dbReference type="UCSC" id="uc007efc.1">
    <molecule id="Q8BMA3-2"/>
    <property type="organism name" value="mouse"/>
</dbReference>
<dbReference type="AGR" id="MGI:2674130"/>
<dbReference type="CTD" id="154043"/>
<dbReference type="MGI" id="MGI:2674130">
    <property type="gene designation" value="Cnksr3"/>
</dbReference>
<dbReference type="VEuPathDB" id="HostDB:ENSMUSG00000015202"/>
<dbReference type="eggNOG" id="KOG1738">
    <property type="taxonomic scope" value="Eukaryota"/>
</dbReference>
<dbReference type="GeneTree" id="ENSGT00940000154428"/>
<dbReference type="HOGENOM" id="CLU_037920_0_0_1"/>
<dbReference type="InParanoid" id="Q8BMA3"/>
<dbReference type="OMA" id="VTRWSPK"/>
<dbReference type="OrthoDB" id="74412at2759"/>
<dbReference type="PhylomeDB" id="Q8BMA3"/>
<dbReference type="TreeFam" id="TF326495"/>
<dbReference type="BioGRID-ORCS" id="215748">
    <property type="hits" value="4 hits in 78 CRISPR screens"/>
</dbReference>
<dbReference type="ChiTaRS" id="Cnksr3">
    <property type="organism name" value="mouse"/>
</dbReference>
<dbReference type="PRO" id="PR:Q8BMA3"/>
<dbReference type="Proteomes" id="UP000000589">
    <property type="component" value="Chromosome 10"/>
</dbReference>
<dbReference type="RNAct" id="Q8BMA3">
    <property type="molecule type" value="protein"/>
</dbReference>
<dbReference type="Bgee" id="ENSMUSG00000015202">
    <property type="expression patterns" value="Expressed in renal corpuscle and 222 other cell types or tissues"/>
</dbReference>
<dbReference type="GO" id="GO:0016324">
    <property type="term" value="C:apical plasma membrane"/>
    <property type="evidence" value="ECO:0007669"/>
    <property type="project" value="UniProtKB-SubCell"/>
</dbReference>
<dbReference type="GO" id="GO:0005737">
    <property type="term" value="C:cytoplasm"/>
    <property type="evidence" value="ECO:0007669"/>
    <property type="project" value="UniProtKB-SubCell"/>
</dbReference>
<dbReference type="GO" id="GO:0070373">
    <property type="term" value="P:negative regulation of ERK1 and ERK2 cascade"/>
    <property type="evidence" value="ECO:0000315"/>
    <property type="project" value="UniProtKB"/>
</dbReference>
<dbReference type="GO" id="GO:0033137">
    <property type="term" value="P:negative regulation of peptidyl-serine phosphorylation"/>
    <property type="evidence" value="ECO:0000315"/>
    <property type="project" value="UniProtKB"/>
</dbReference>
<dbReference type="GO" id="GO:0010765">
    <property type="term" value="P:positive regulation of sodium ion transport"/>
    <property type="evidence" value="ECO:0000315"/>
    <property type="project" value="UniProtKB"/>
</dbReference>
<dbReference type="CDD" id="cd06748">
    <property type="entry name" value="PDZ_CNK1_2_3-like"/>
    <property type="match status" value="1"/>
</dbReference>
<dbReference type="CDD" id="cd09511">
    <property type="entry name" value="SAM_CNK1_2_3-suppressor"/>
    <property type="match status" value="1"/>
</dbReference>
<dbReference type="FunFam" id="1.10.150.50:FF:000019">
    <property type="entry name" value="Connector enhancer of kinase suppressor of Ras 2"/>
    <property type="match status" value="1"/>
</dbReference>
<dbReference type="FunFam" id="2.30.42.10:FF:000060">
    <property type="entry name" value="Connector enhancer of kinase suppressor of Ras 2"/>
    <property type="match status" value="1"/>
</dbReference>
<dbReference type="Gene3D" id="2.30.42.10">
    <property type="match status" value="1"/>
</dbReference>
<dbReference type="Gene3D" id="1.10.150.50">
    <property type="entry name" value="Transcription Factor, Ets-1"/>
    <property type="match status" value="1"/>
</dbReference>
<dbReference type="InterPro" id="IPR049628">
    <property type="entry name" value="CNK1-3_SAM"/>
</dbReference>
<dbReference type="InterPro" id="IPR010599">
    <property type="entry name" value="CNK2/3_dom"/>
</dbReference>
<dbReference type="InterPro" id="IPR051566">
    <property type="entry name" value="CNKSR"/>
</dbReference>
<dbReference type="InterPro" id="IPR017874">
    <property type="entry name" value="CRIC_domain"/>
</dbReference>
<dbReference type="InterPro" id="IPR001478">
    <property type="entry name" value="PDZ"/>
</dbReference>
<dbReference type="InterPro" id="IPR036034">
    <property type="entry name" value="PDZ_sf"/>
</dbReference>
<dbReference type="InterPro" id="IPR001660">
    <property type="entry name" value="SAM"/>
</dbReference>
<dbReference type="InterPro" id="IPR013761">
    <property type="entry name" value="SAM/pointed_sf"/>
</dbReference>
<dbReference type="PANTHER" id="PTHR12844">
    <property type="entry name" value="CONNECTOR ENCHANCER OF KINASE SUPPRESSOR OF RAS"/>
    <property type="match status" value="1"/>
</dbReference>
<dbReference type="PANTHER" id="PTHR12844:SF17">
    <property type="entry name" value="CONNECTOR ENHANCER OF KINASE SUPPRESSOR OF RAS 3"/>
    <property type="match status" value="1"/>
</dbReference>
<dbReference type="Pfam" id="PF06663">
    <property type="entry name" value="CNK2_3_dom"/>
    <property type="match status" value="1"/>
</dbReference>
<dbReference type="Pfam" id="PF10534">
    <property type="entry name" value="CRIC_ras_sig"/>
    <property type="match status" value="1"/>
</dbReference>
<dbReference type="Pfam" id="PF00595">
    <property type="entry name" value="PDZ"/>
    <property type="match status" value="1"/>
</dbReference>
<dbReference type="Pfam" id="PF00536">
    <property type="entry name" value="SAM_1"/>
    <property type="match status" value="1"/>
</dbReference>
<dbReference type="SMART" id="SM00228">
    <property type="entry name" value="PDZ"/>
    <property type="match status" value="1"/>
</dbReference>
<dbReference type="SMART" id="SM00454">
    <property type="entry name" value="SAM"/>
    <property type="match status" value="1"/>
</dbReference>
<dbReference type="SUPFAM" id="SSF50156">
    <property type="entry name" value="PDZ domain-like"/>
    <property type="match status" value="1"/>
</dbReference>
<dbReference type="SUPFAM" id="SSF47769">
    <property type="entry name" value="SAM/Pointed domain"/>
    <property type="match status" value="1"/>
</dbReference>
<dbReference type="PROSITE" id="PS51290">
    <property type="entry name" value="CRIC"/>
    <property type="match status" value="1"/>
</dbReference>
<dbReference type="PROSITE" id="PS50106">
    <property type="entry name" value="PDZ"/>
    <property type="match status" value="1"/>
</dbReference>
<dbReference type="PROSITE" id="PS50105">
    <property type="entry name" value="SAM_DOMAIN"/>
    <property type="match status" value="1"/>
</dbReference>
<evidence type="ECO:0000250" key="1">
    <source>
        <dbReference type="UniProtKB" id="Q6P9H4"/>
    </source>
</evidence>
<evidence type="ECO:0000255" key="2">
    <source>
        <dbReference type="PROSITE-ProRule" id="PRU00143"/>
    </source>
</evidence>
<evidence type="ECO:0000255" key="3">
    <source>
        <dbReference type="PROSITE-ProRule" id="PRU00184"/>
    </source>
</evidence>
<evidence type="ECO:0000255" key="4">
    <source>
        <dbReference type="PROSITE-ProRule" id="PRU00621"/>
    </source>
</evidence>
<evidence type="ECO:0000256" key="5">
    <source>
        <dbReference type="SAM" id="MobiDB-lite"/>
    </source>
</evidence>
<evidence type="ECO:0000269" key="6">
    <source>
    </source>
</evidence>
<evidence type="ECO:0000269" key="7">
    <source>
    </source>
</evidence>
<evidence type="ECO:0000303" key="8">
    <source>
    </source>
</evidence>
<evidence type="ECO:0000305" key="9"/>
<evidence type="ECO:0007744" key="10">
    <source>
    </source>
</evidence>
<gene>
    <name type="primary">Cnksr3</name>
</gene>